<keyword id="KW-0002">3D-structure</keyword>
<keyword id="KW-0067">ATP-binding</keyword>
<keyword id="KW-0130">Cell adhesion</keyword>
<keyword id="KW-1003">Cell membrane</keyword>
<keyword id="KW-1015">Disulfide bond</keyword>
<keyword id="KW-0325">Glycoprotein</keyword>
<keyword id="KW-1183">Host cell receptor for virus entry</keyword>
<keyword id="KW-0945">Host-virus interaction</keyword>
<keyword id="KW-0393">Immunoglobulin domain</keyword>
<keyword id="KW-0418">Kinase</keyword>
<keyword id="KW-0472">Membrane</keyword>
<keyword id="KW-0547">Nucleotide-binding</keyword>
<keyword id="KW-0597">Phosphoprotein</keyword>
<keyword id="KW-1267">Proteomics identification</keyword>
<keyword id="KW-0675">Receptor</keyword>
<keyword id="KW-1185">Reference proteome</keyword>
<keyword id="KW-0677">Repeat</keyword>
<keyword id="KW-0732">Signal</keyword>
<keyword id="KW-0808">Transferase</keyword>
<keyword id="KW-0812">Transmembrane</keyword>
<keyword id="KW-1133">Transmembrane helix</keyword>
<keyword id="KW-0829">Tyrosine-protein kinase</keyword>
<name>TYRO3_HUMAN</name>
<comment type="function">
    <text evidence="13">Receptor tyrosine kinase that transduces signals from the extracellular matrix into the cytoplasm by binding to several ligands including TULP1 or GAS6. Regulates many physiological processes including cell survival, migration and differentiation. Ligand binding at the cell surface induces dimerization and autophosphorylation of TYRO3 on its intracellular domain that provides docking sites for downstream signaling molecules. Following activation by ligand, interacts with PIK3R1 and thereby enhances PI3-kinase activity. Activates the AKT survival pathway, including nuclear translocation of NF-kappa-B and up-regulation of transcription of NF-kappa-B-regulated genes. TYRO3 signaling plays a role in various processes such as neuron protection from excitotoxic injury, platelet aggregation and cytoskeleton reorganization. Also plays an important role in inhibition of Toll-like receptors (TLRs)-mediated innate immune response by activating STAT1, which selectively induces production of suppressors of cytokine signaling SOCS1 and SOCS3.</text>
</comment>
<comment type="function">
    <text evidence="14 15 16">(Microbial infection) Acts as a receptor for lassa virus and lymphocytic choriomeningitis virus, possibly through GAS6 binding to phosphatidyl-serine at the surface of virion envelope.</text>
</comment>
<comment type="function">
    <text evidence="11">(Microbial infection) Acts as a receptor for Ebolavirus, possibly through GAS6 binding to phosphatidyl-serine at the surface of virion envelope.</text>
</comment>
<comment type="catalytic activity">
    <reaction evidence="7">
        <text>L-tyrosyl-[protein] + ATP = O-phospho-L-tyrosyl-[protein] + ADP + H(+)</text>
        <dbReference type="Rhea" id="RHEA:10596"/>
        <dbReference type="Rhea" id="RHEA-COMP:10136"/>
        <dbReference type="Rhea" id="RHEA-COMP:20101"/>
        <dbReference type="ChEBI" id="CHEBI:15378"/>
        <dbReference type="ChEBI" id="CHEBI:30616"/>
        <dbReference type="ChEBI" id="CHEBI:46858"/>
        <dbReference type="ChEBI" id="CHEBI:61978"/>
        <dbReference type="ChEBI" id="CHEBI:456216"/>
        <dbReference type="EC" id="2.7.10.1"/>
    </reaction>
</comment>
<comment type="subunit">
    <text evidence="1">Monomer and homodimer. Interacts (via N-terminus) with extracellular ligands TULP1 and GAS6 (By similarity). Interacts with PIK3R1; this interaction increases PI3-kinase activity (By similarity).</text>
</comment>
<comment type="interaction">
    <interactant intactId="EBI-3951628">
        <id>Q06418</id>
    </interactant>
    <interactant intactId="EBI-401755">
        <id>P62993</id>
        <label>GRB2</label>
    </interactant>
    <organismsDiffer>false</organismsDiffer>
    <experiments>4</experiments>
</comment>
<comment type="interaction">
    <interactant intactId="EBI-3951628">
        <id>Q06418</id>
    </interactant>
    <interactant intactId="EBI-352572">
        <id>P08238</id>
        <label>HSP90AB1</label>
    </interactant>
    <organismsDiffer>false</organismsDiffer>
    <experiments>2</experiments>
</comment>
<comment type="interaction">
    <interactant intactId="EBI-3951628">
        <id>Q06418</id>
    </interactant>
    <interactant intactId="EBI-10224152">
        <id>Q9Y5K2</id>
        <label>KLK4</label>
    </interactant>
    <organismsDiffer>false</organismsDiffer>
    <experiments>3</experiments>
</comment>
<comment type="interaction">
    <interactant intactId="EBI-3951628">
        <id>Q06418</id>
    </interactant>
    <interactant intactId="EBI-10171697">
        <id>Q6A162</id>
        <label>KRT40</label>
    </interactant>
    <organismsDiffer>false</organismsDiffer>
    <experiments>3</experiments>
</comment>
<comment type="interaction">
    <interactant intactId="EBI-3951628">
        <id>Q06418</id>
    </interactant>
    <interactant intactId="EBI-10172290">
        <id>P60409</id>
        <label>KRTAP10-7</label>
    </interactant>
    <organismsDiffer>false</organismsDiffer>
    <experiments>3</experiments>
</comment>
<comment type="interaction">
    <interactant intactId="EBI-3951628">
        <id>Q06418</id>
    </interactant>
    <interactant intactId="EBI-10171774">
        <id>P60410</id>
        <label>KRTAP10-8</label>
    </interactant>
    <organismsDiffer>false</organismsDiffer>
    <experiments>3</experiments>
</comment>
<comment type="interaction">
    <interactant intactId="EBI-3951628">
        <id>Q06418</id>
    </interactant>
    <interactant intactId="EBI-10172052">
        <id>P60411</id>
        <label>KRTAP10-9</label>
    </interactant>
    <organismsDiffer>false</organismsDiffer>
    <experiments>3</experiments>
</comment>
<comment type="interaction">
    <interactant intactId="EBI-3951628">
        <id>Q06418</id>
    </interactant>
    <interactant intactId="EBI-10172511">
        <id>Q9BYR5</id>
        <label>KRTAP4-2</label>
    </interactant>
    <organismsDiffer>false</organismsDiffer>
    <experiments>3</experiments>
</comment>
<comment type="interaction">
    <interactant intactId="EBI-3951628">
        <id>Q06418</id>
    </interactant>
    <interactant intactId="EBI-3958099">
        <id>P26371</id>
        <label>KRTAP5-9</label>
    </interactant>
    <organismsDiffer>false</organismsDiffer>
    <experiments>5</experiments>
</comment>
<comment type="interaction">
    <interactant intactId="EBI-3951628">
        <id>Q06418</id>
    </interactant>
    <interactant intactId="EBI-1044640">
        <id>Q9BYQ4</id>
        <label>KRTAP9-2</label>
    </interactant>
    <organismsDiffer>false</organismsDiffer>
    <experiments>3</experiments>
</comment>
<comment type="interaction">
    <interactant intactId="EBI-3951628">
        <id>Q06418</id>
    </interactant>
    <interactant intactId="EBI-724076">
        <id>Q99750</id>
        <label>MDFI</label>
    </interactant>
    <organismsDiffer>false</organismsDiffer>
    <experiments>3</experiments>
</comment>
<comment type="interaction">
    <interactant intactId="EBI-3951628">
        <id>Q06418</id>
    </interactant>
    <interactant intactId="EBI-11747707">
        <id>B2RUY7</id>
        <label>VWC2L</label>
    </interactant>
    <organismsDiffer>false</organismsDiffer>
    <experiments>3</experiments>
</comment>
<comment type="subcellular location">
    <subcellularLocation>
        <location>Cell membrane</location>
        <topology>Single-pass type I membrane protein</topology>
    </subcellularLocation>
</comment>
<comment type="tissue specificity">
    <text>Abundant in the brain and lower levels in other tissues.</text>
</comment>
<comment type="PTM">
    <text>Autophosphorylated.</text>
</comment>
<comment type="similarity">
    <text evidence="5">Belongs to the protein kinase superfamily. Tyr protein kinase family. AXL/UFO subfamily.</text>
</comment>
<comment type="sequence caution" evidence="18">
    <conflict type="erroneous initiation">
        <sequence resource="EMBL-CDS" id="BAA21781"/>
    </conflict>
</comment>
<comment type="online information" name="Atlas of Genetics and Cytogenetics in Oncology and Haematology">
    <link uri="https://atlasgeneticsoncology.org/gene/42739/TYRO3"/>
</comment>
<evidence type="ECO:0000250" key="1"/>
<evidence type="ECO:0000250" key="2">
    <source>
        <dbReference type="UniProtKB" id="P55146"/>
    </source>
</evidence>
<evidence type="ECO:0000255" key="3"/>
<evidence type="ECO:0000255" key="4">
    <source>
        <dbReference type="PROSITE-ProRule" id="PRU00114"/>
    </source>
</evidence>
<evidence type="ECO:0000255" key="5">
    <source>
        <dbReference type="PROSITE-ProRule" id="PRU00159"/>
    </source>
</evidence>
<evidence type="ECO:0000255" key="6">
    <source>
        <dbReference type="PROSITE-ProRule" id="PRU00316"/>
    </source>
</evidence>
<evidence type="ECO:0000255" key="7">
    <source>
        <dbReference type="PROSITE-ProRule" id="PRU10028"/>
    </source>
</evidence>
<evidence type="ECO:0000256" key="8">
    <source>
        <dbReference type="SAM" id="MobiDB-lite"/>
    </source>
</evidence>
<evidence type="ECO:0000269" key="9">
    <source>
    </source>
</evidence>
<evidence type="ECO:0000269" key="10">
    <source>
    </source>
</evidence>
<evidence type="ECO:0000269" key="11">
    <source>
    </source>
</evidence>
<evidence type="ECO:0000269" key="12">
    <source>
    </source>
</evidence>
<evidence type="ECO:0000269" key="13">
    <source>
    </source>
</evidence>
<evidence type="ECO:0000269" key="14">
    <source>
    </source>
</evidence>
<evidence type="ECO:0000269" key="15">
    <source>
    </source>
</evidence>
<evidence type="ECO:0000269" key="16">
    <source>
    </source>
</evidence>
<evidence type="ECO:0000269" key="17">
    <source>
    </source>
</evidence>
<evidence type="ECO:0000305" key="18"/>
<evidence type="ECO:0007744" key="19">
    <source>
    </source>
</evidence>
<evidence type="ECO:0007829" key="20">
    <source>
        <dbReference type="PDB" id="1RHF"/>
    </source>
</evidence>
<proteinExistence type="evidence at protein level"/>
<feature type="signal peptide" evidence="3">
    <location>
        <begin position="1"/>
        <end position="40"/>
    </location>
</feature>
<feature type="chain" id="PRO_0000024478" description="Tyrosine-protein kinase receptor TYRO3">
    <location>
        <begin position="41"/>
        <end position="890"/>
    </location>
</feature>
<feature type="topological domain" description="Extracellular" evidence="3">
    <location>
        <begin position="41"/>
        <end position="429"/>
    </location>
</feature>
<feature type="transmembrane region" description="Helical" evidence="3">
    <location>
        <begin position="430"/>
        <end position="450"/>
    </location>
</feature>
<feature type="topological domain" description="Cytoplasmic" evidence="3">
    <location>
        <begin position="451"/>
        <end position="890"/>
    </location>
</feature>
<feature type="domain" description="Ig-like C2-type 1">
    <location>
        <begin position="41"/>
        <end position="128"/>
    </location>
</feature>
<feature type="domain" description="Ig-like C2-type 2">
    <location>
        <begin position="139"/>
        <end position="220"/>
    </location>
</feature>
<feature type="domain" description="Fibronectin type-III 1" evidence="6">
    <location>
        <begin position="227"/>
        <end position="320"/>
    </location>
</feature>
<feature type="domain" description="Fibronectin type-III 2" evidence="6">
    <location>
        <begin position="325"/>
        <end position="416"/>
    </location>
</feature>
<feature type="domain" description="Protein kinase" evidence="5">
    <location>
        <begin position="518"/>
        <end position="790"/>
    </location>
</feature>
<feature type="region of interest" description="Disordered" evidence="8">
    <location>
        <begin position="815"/>
        <end position="837"/>
    </location>
</feature>
<feature type="region of interest" description="Disordered" evidence="8">
    <location>
        <begin position="851"/>
        <end position="871"/>
    </location>
</feature>
<feature type="active site" description="Proton acceptor" evidence="5 7">
    <location>
        <position position="655"/>
    </location>
</feature>
<feature type="binding site" evidence="5">
    <location>
        <begin position="524"/>
        <end position="532"/>
    </location>
    <ligand>
        <name>ATP</name>
        <dbReference type="ChEBI" id="CHEBI:30616"/>
    </ligand>
</feature>
<feature type="binding site" evidence="5">
    <location>
        <position position="550"/>
    </location>
    <ligand>
        <name>ATP</name>
        <dbReference type="ChEBI" id="CHEBI:30616"/>
    </ligand>
</feature>
<feature type="modified residue" description="Phosphoserine" evidence="19">
    <location>
        <position position="466"/>
    </location>
</feature>
<feature type="modified residue" description="Phosphotyrosine; by autocatalysis" evidence="1">
    <location>
        <position position="681"/>
    </location>
</feature>
<feature type="modified residue" description="Phosphotyrosine; by autocatalysis" evidence="1">
    <location>
        <position position="685"/>
    </location>
</feature>
<feature type="modified residue" description="Phosphotyrosine; by autocatalysis" evidence="1">
    <location>
        <position position="686"/>
    </location>
</feature>
<feature type="modified residue" description="Phosphotyrosine; by autocatalysis" evidence="1">
    <location>
        <position position="804"/>
    </location>
</feature>
<feature type="modified residue" description="Phosphoserine" evidence="19">
    <location>
        <position position="818"/>
    </location>
</feature>
<feature type="modified residue" description="Phosphoserine" evidence="2">
    <location>
        <position position="869"/>
    </location>
</feature>
<feature type="glycosylation site" description="N-linked (GlcNAc...) asparagine" evidence="3">
    <location>
        <position position="63"/>
    </location>
</feature>
<feature type="glycosylation site" description="N-linked (GlcNAc...) asparagine" evidence="3">
    <location>
        <position position="191"/>
    </location>
</feature>
<feature type="glycosylation site" description="N-linked (GlcNAc...) asparagine" evidence="3">
    <location>
        <position position="230"/>
    </location>
</feature>
<feature type="glycosylation site" description="N-linked (GlcNAc...) asparagine" evidence="3">
    <location>
        <position position="240"/>
    </location>
</feature>
<feature type="glycosylation site" description="N-linked (GlcNAc...) asparagine" evidence="3">
    <location>
        <position position="293"/>
    </location>
</feature>
<feature type="glycosylation site" description="N-linked (GlcNAc...) asparagine" evidence="3">
    <location>
        <position position="366"/>
    </location>
</feature>
<feature type="glycosylation site" description="N-linked (GlcNAc...) asparagine" evidence="3">
    <location>
        <position position="380"/>
    </location>
</feature>
<feature type="disulfide bond" evidence="4 9">
    <location>
        <begin position="64"/>
        <end position="117"/>
    </location>
</feature>
<feature type="disulfide bond" evidence="4 9">
    <location>
        <begin position="160"/>
        <end position="203"/>
    </location>
</feature>
<feature type="sequence variant" id="VAR_045886" description="In dbSNP:rs17854578." evidence="10">
    <original>P</original>
    <variation>L</variation>
    <location>
        <position position="21"/>
    </location>
</feature>
<feature type="sequence variant" id="VAR_045887" description="In dbSNP:rs12148316.">
    <original>I</original>
    <variation>N</variation>
    <location>
        <position position="346"/>
    </location>
</feature>
<feature type="sequence variant" id="VAR_045888" description="In dbSNP:rs17857363." evidence="10">
    <original>G</original>
    <variation>S</variation>
    <location>
        <position position="542"/>
    </location>
</feature>
<feature type="sequence variant" id="VAR_045889" description="In dbSNP:rs1042057." evidence="17">
    <original>A</original>
    <variation>V</variation>
    <location>
        <position position="815"/>
    </location>
</feature>
<feature type="sequence variant" id="VAR_045890" description="In dbSNP:rs17854579." evidence="10">
    <original>L</original>
    <variation>M</variation>
    <location>
        <position position="819"/>
    </location>
</feature>
<feature type="sequence variant" id="VAR_045891" description="In dbSNP:rs17857364." evidence="10">
    <original>R</original>
    <variation>G</variation>
    <location>
        <position position="824"/>
    </location>
</feature>
<feature type="sequence variant" id="VAR_041876" evidence="12">
    <original>A</original>
    <variation>T</variation>
    <location>
        <position position="831"/>
    </location>
</feature>
<feature type="mutagenesis site" description="Abolishes dimerization." evidence="9">
    <original>I</original>
    <variation>R</variation>
    <location>
        <position position="99"/>
    </location>
</feature>
<feature type="sequence conflict" description="In Ref. 3; AAC50070." evidence="18" ref="3">
    <location>
        <begin position="29"/>
        <end position="36"/>
    </location>
</feature>
<feature type="sequence conflict" description="In Ref. 4; BAA21781." evidence="18" ref="4">
    <original>L</original>
    <variation>F</variation>
    <location>
        <position position="285"/>
    </location>
</feature>
<feature type="sequence conflict" description="In Ref. 4; BAA21781." evidence="18" ref="4">
    <original>N</original>
    <variation>I</variation>
    <location>
        <position position="293"/>
    </location>
</feature>
<feature type="sequence conflict" description="In Ref. 4; BAA21781." evidence="18" ref="4">
    <original>E</original>
    <variation>V</variation>
    <location>
        <position position="341"/>
    </location>
</feature>
<feature type="sequence conflict" description="In Ref. 4; BAA21781." evidence="18" ref="4">
    <original>E</original>
    <variation>D</variation>
    <location>
        <position position="812"/>
    </location>
</feature>
<feature type="strand" evidence="20">
    <location>
        <begin position="50"/>
        <end position="55"/>
    </location>
</feature>
<feature type="strand" evidence="20">
    <location>
        <begin position="60"/>
        <end position="68"/>
    </location>
</feature>
<feature type="strand" evidence="20">
    <location>
        <begin position="74"/>
        <end position="78"/>
    </location>
</feature>
<feature type="strand" evidence="20">
    <location>
        <begin position="85"/>
        <end position="94"/>
    </location>
</feature>
<feature type="strand" evidence="20">
    <location>
        <begin position="97"/>
        <end position="106"/>
    </location>
</feature>
<feature type="helix" evidence="20">
    <location>
        <begin position="109"/>
        <end position="111"/>
    </location>
</feature>
<feature type="strand" evidence="20">
    <location>
        <begin position="113"/>
        <end position="121"/>
    </location>
</feature>
<feature type="strand" evidence="20">
    <location>
        <begin position="131"/>
        <end position="136"/>
    </location>
</feature>
<feature type="strand" evidence="20">
    <location>
        <begin position="140"/>
        <end position="143"/>
    </location>
</feature>
<feature type="strand" evidence="20">
    <location>
        <begin position="148"/>
        <end position="150"/>
    </location>
</feature>
<feature type="strand" evidence="20">
    <location>
        <begin position="156"/>
        <end position="163"/>
    </location>
</feature>
<feature type="strand" evidence="20">
    <location>
        <begin position="165"/>
        <end position="167"/>
    </location>
</feature>
<feature type="strand" evidence="20">
    <location>
        <begin position="170"/>
        <end position="175"/>
    </location>
</feature>
<feature type="strand" evidence="20">
    <location>
        <begin position="183"/>
        <end position="192"/>
    </location>
</feature>
<feature type="strand" evidence="20">
    <location>
        <begin position="199"/>
        <end position="207"/>
    </location>
</feature>
<feature type="strand" evidence="20">
    <location>
        <begin position="210"/>
        <end position="213"/>
    </location>
</feature>
<feature type="strand" evidence="20">
    <location>
        <begin position="217"/>
        <end position="221"/>
    </location>
</feature>
<dbReference type="EC" id="2.7.10.1"/>
<dbReference type="EMBL" id="U05682">
    <property type="protein sequence ID" value="AAA19236.1"/>
    <property type="molecule type" value="mRNA"/>
</dbReference>
<dbReference type="EMBL" id="D17517">
    <property type="protein sequence ID" value="BAA04467.1"/>
    <property type="molecule type" value="mRNA"/>
</dbReference>
<dbReference type="EMBL" id="U18934">
    <property type="protein sequence ID" value="AAC50070.1"/>
    <property type="molecule type" value="mRNA"/>
</dbReference>
<dbReference type="EMBL" id="D50479">
    <property type="protein sequence ID" value="BAA21781.1"/>
    <property type="status" value="ALT_INIT"/>
    <property type="molecule type" value="mRNA"/>
</dbReference>
<dbReference type="EMBL" id="BC049368">
    <property type="protein sequence ID" value="AAH49368.1"/>
    <property type="molecule type" value="mRNA"/>
</dbReference>
<dbReference type="EMBL" id="BC051756">
    <property type="protein sequence ID" value="AAH51756.1"/>
    <property type="molecule type" value="mRNA"/>
</dbReference>
<dbReference type="EMBL" id="X72886">
    <property type="protein sequence ID" value="CAA51396.1"/>
    <property type="molecule type" value="mRNA"/>
</dbReference>
<dbReference type="CCDS" id="CCDS10080.1"/>
<dbReference type="PIR" id="A53743">
    <property type="entry name" value="A53743"/>
</dbReference>
<dbReference type="PIR" id="I38912">
    <property type="entry name" value="I38912"/>
</dbReference>
<dbReference type="RefSeq" id="NP_001317193.1">
    <property type="nucleotide sequence ID" value="NM_001330264.1"/>
</dbReference>
<dbReference type="RefSeq" id="NP_006284.2">
    <property type="nucleotide sequence ID" value="NM_006293.3"/>
</dbReference>
<dbReference type="PDB" id="1RHF">
    <property type="method" value="X-ray"/>
    <property type="resolution" value="1.96 A"/>
    <property type="chains" value="A/B=41-222"/>
</dbReference>
<dbReference type="PDBsum" id="1RHF"/>
<dbReference type="SMR" id="Q06418"/>
<dbReference type="BioGRID" id="113152">
    <property type="interactions" value="158"/>
</dbReference>
<dbReference type="FunCoup" id="Q06418">
    <property type="interactions" value="383"/>
</dbReference>
<dbReference type="IntAct" id="Q06418">
    <property type="interactions" value="122"/>
</dbReference>
<dbReference type="MINT" id="Q06418"/>
<dbReference type="STRING" id="9606.ENSP00000263798"/>
<dbReference type="BindingDB" id="Q06418"/>
<dbReference type="ChEMBL" id="CHEMBL5314"/>
<dbReference type="DrugBank" id="DB12010">
    <property type="generic name" value="Fostamatinib"/>
</dbReference>
<dbReference type="DrugCentral" id="Q06418"/>
<dbReference type="GuidetoPHARMACOLOGY" id="1836"/>
<dbReference type="GlyConnect" id="1982">
    <property type="glycosylation" value="8 N-Linked glycans (5 sites)"/>
</dbReference>
<dbReference type="GlyCosmos" id="Q06418">
    <property type="glycosylation" value="7 sites, 8 glycans"/>
</dbReference>
<dbReference type="GlyGen" id="Q06418">
    <property type="glycosylation" value="9 sites, 13 N-linked glycans (7 sites)"/>
</dbReference>
<dbReference type="iPTMnet" id="Q06418"/>
<dbReference type="PhosphoSitePlus" id="Q06418"/>
<dbReference type="BioMuta" id="TYRO3"/>
<dbReference type="DMDM" id="1717829"/>
<dbReference type="jPOST" id="Q06418"/>
<dbReference type="MassIVE" id="Q06418"/>
<dbReference type="PaxDb" id="9606-ENSP00000263798"/>
<dbReference type="PeptideAtlas" id="Q06418"/>
<dbReference type="ProteomicsDB" id="58444"/>
<dbReference type="Pumba" id="Q06418"/>
<dbReference type="Antibodypedia" id="2066">
    <property type="antibodies" value="783 antibodies from 35 providers"/>
</dbReference>
<dbReference type="DNASU" id="7301"/>
<dbReference type="Ensembl" id="ENST00000263798.8">
    <property type="protein sequence ID" value="ENSP00000263798.3"/>
    <property type="gene ID" value="ENSG00000092445.12"/>
</dbReference>
<dbReference type="GeneID" id="7301"/>
<dbReference type="KEGG" id="hsa:7301"/>
<dbReference type="MANE-Select" id="ENST00000263798.8">
    <property type="protein sequence ID" value="ENSP00000263798.3"/>
    <property type="RefSeq nucleotide sequence ID" value="NM_006293.4"/>
    <property type="RefSeq protein sequence ID" value="NP_006284.2"/>
</dbReference>
<dbReference type="UCSC" id="uc001zof.3">
    <property type="organism name" value="human"/>
</dbReference>
<dbReference type="AGR" id="HGNC:12446"/>
<dbReference type="CTD" id="7301"/>
<dbReference type="DisGeNET" id="7301"/>
<dbReference type="GeneCards" id="TYRO3"/>
<dbReference type="HGNC" id="HGNC:12446">
    <property type="gene designation" value="TYRO3"/>
</dbReference>
<dbReference type="HPA" id="ENSG00000092445">
    <property type="expression patterns" value="Tissue enhanced (brain, ovary)"/>
</dbReference>
<dbReference type="MIM" id="600341">
    <property type="type" value="gene"/>
</dbReference>
<dbReference type="neXtProt" id="NX_Q06418"/>
<dbReference type="OpenTargets" id="ENSG00000092445"/>
<dbReference type="PharmGKB" id="PA37097"/>
<dbReference type="VEuPathDB" id="HostDB:ENSG00000092445"/>
<dbReference type="eggNOG" id="ENOG502QRYR">
    <property type="taxonomic scope" value="Eukaryota"/>
</dbReference>
<dbReference type="GeneTree" id="ENSGT00940000155879"/>
<dbReference type="InParanoid" id="Q06418"/>
<dbReference type="OMA" id="DCREDIY"/>
<dbReference type="OrthoDB" id="4062651at2759"/>
<dbReference type="PAN-GO" id="Q06418">
    <property type="GO annotations" value="10 GO annotations based on evolutionary models"/>
</dbReference>
<dbReference type="PhylomeDB" id="Q06418"/>
<dbReference type="TreeFam" id="TF317402"/>
<dbReference type="BRENDA" id="2.7.10.1">
    <property type="organism ID" value="2681"/>
</dbReference>
<dbReference type="PathwayCommons" id="Q06418"/>
<dbReference type="SignaLink" id="Q06418"/>
<dbReference type="SIGNOR" id="Q06418"/>
<dbReference type="BioGRID-ORCS" id="7301">
    <property type="hits" value="48 hits in 1189 CRISPR screens"/>
</dbReference>
<dbReference type="CD-CODE" id="91857CE7">
    <property type="entry name" value="Nucleolus"/>
</dbReference>
<dbReference type="ChiTaRS" id="TYRO3">
    <property type="organism name" value="human"/>
</dbReference>
<dbReference type="EvolutionaryTrace" id="Q06418"/>
<dbReference type="GeneWiki" id="TYRO3"/>
<dbReference type="GenomeRNAi" id="7301"/>
<dbReference type="Pharos" id="Q06418">
    <property type="development level" value="Tchem"/>
</dbReference>
<dbReference type="PRO" id="PR:Q06418"/>
<dbReference type="Proteomes" id="UP000005640">
    <property type="component" value="Chromosome 15"/>
</dbReference>
<dbReference type="RNAct" id="Q06418">
    <property type="molecule type" value="protein"/>
</dbReference>
<dbReference type="Bgee" id="ENSG00000092445">
    <property type="expression patterns" value="Expressed in frontal pole and 178 other cell types or tissues"/>
</dbReference>
<dbReference type="ExpressionAtlas" id="Q06418">
    <property type="expression patterns" value="baseline and differential"/>
</dbReference>
<dbReference type="GO" id="GO:0009986">
    <property type="term" value="C:cell surface"/>
    <property type="evidence" value="ECO:0000314"/>
    <property type="project" value="UniProtKB"/>
</dbReference>
<dbReference type="GO" id="GO:0005789">
    <property type="term" value="C:endoplasmic reticulum membrane"/>
    <property type="evidence" value="ECO:0000250"/>
    <property type="project" value="UniProtKB"/>
</dbReference>
<dbReference type="GO" id="GO:0005635">
    <property type="term" value="C:nuclear envelope"/>
    <property type="evidence" value="ECO:0000250"/>
    <property type="project" value="UniProtKB"/>
</dbReference>
<dbReference type="GO" id="GO:0005634">
    <property type="term" value="C:nucleus"/>
    <property type="evidence" value="ECO:0000250"/>
    <property type="project" value="UniProtKB"/>
</dbReference>
<dbReference type="GO" id="GO:0005886">
    <property type="term" value="C:plasma membrane"/>
    <property type="evidence" value="ECO:0000318"/>
    <property type="project" value="GO_Central"/>
</dbReference>
<dbReference type="GO" id="GO:0043235">
    <property type="term" value="C:receptor complex"/>
    <property type="evidence" value="ECO:0000318"/>
    <property type="project" value="GO_Central"/>
</dbReference>
<dbReference type="GO" id="GO:0005524">
    <property type="term" value="F:ATP binding"/>
    <property type="evidence" value="ECO:0007669"/>
    <property type="project" value="UniProtKB-KW"/>
</dbReference>
<dbReference type="GO" id="GO:0043548">
    <property type="term" value="F:phosphatidylinositol 3-kinase binding"/>
    <property type="evidence" value="ECO:0000353"/>
    <property type="project" value="UniProtKB"/>
</dbReference>
<dbReference type="GO" id="GO:0004713">
    <property type="term" value="F:protein tyrosine kinase activity"/>
    <property type="evidence" value="ECO:0000314"/>
    <property type="project" value="UniProtKB"/>
</dbReference>
<dbReference type="GO" id="GO:0004714">
    <property type="term" value="F:transmembrane receptor protein tyrosine kinase activity"/>
    <property type="evidence" value="ECO:0000318"/>
    <property type="project" value="GO_Central"/>
</dbReference>
<dbReference type="GO" id="GO:0001618">
    <property type="term" value="F:virus receptor activity"/>
    <property type="evidence" value="ECO:0000314"/>
    <property type="project" value="FlyBase"/>
</dbReference>
<dbReference type="GO" id="GO:0043277">
    <property type="term" value="P:apoptotic cell clearance"/>
    <property type="evidence" value="ECO:0000250"/>
    <property type="project" value="UniProtKB"/>
</dbReference>
<dbReference type="GO" id="GO:0007155">
    <property type="term" value="P:cell adhesion"/>
    <property type="evidence" value="ECO:0000303"/>
    <property type="project" value="UniProtKB"/>
</dbReference>
<dbReference type="GO" id="GO:0016477">
    <property type="term" value="P:cell migration"/>
    <property type="evidence" value="ECO:0000318"/>
    <property type="project" value="GO_Central"/>
</dbReference>
<dbReference type="GO" id="GO:0007169">
    <property type="term" value="P:cell surface receptor protein tyrosine kinase signaling pathway"/>
    <property type="evidence" value="ECO:0000318"/>
    <property type="project" value="GO_Central"/>
</dbReference>
<dbReference type="GO" id="GO:0051649">
    <property type="term" value="P:establishment of localization in cell"/>
    <property type="evidence" value="ECO:0007669"/>
    <property type="project" value="Ensembl"/>
</dbReference>
<dbReference type="GO" id="GO:0021885">
    <property type="term" value="P:forebrain cell migration"/>
    <property type="evidence" value="ECO:0000250"/>
    <property type="project" value="UniProtKB"/>
</dbReference>
<dbReference type="GO" id="GO:0001779">
    <property type="term" value="P:natural killer cell differentiation"/>
    <property type="evidence" value="ECO:0007669"/>
    <property type="project" value="Ensembl"/>
</dbReference>
<dbReference type="GO" id="GO:0050728">
    <property type="term" value="P:negative regulation of inflammatory response"/>
    <property type="evidence" value="ECO:0000250"/>
    <property type="project" value="UniProtKB"/>
</dbReference>
<dbReference type="GO" id="GO:0045824">
    <property type="term" value="P:negative regulation of innate immune response"/>
    <property type="evidence" value="ECO:0000250"/>
    <property type="project" value="UniProtKB"/>
</dbReference>
<dbReference type="GO" id="GO:0051250">
    <property type="term" value="P:negative regulation of lymphocyte activation"/>
    <property type="evidence" value="ECO:0007669"/>
    <property type="project" value="Ensembl"/>
</dbReference>
<dbReference type="GO" id="GO:0043524">
    <property type="term" value="P:negative regulation of neuron apoptotic process"/>
    <property type="evidence" value="ECO:0000250"/>
    <property type="project" value="UniProtKB"/>
</dbReference>
<dbReference type="GO" id="GO:0034122">
    <property type="term" value="P:negative regulation of toll-like receptor signaling pathway"/>
    <property type="evidence" value="ECO:0000250"/>
    <property type="project" value="UniProtKB"/>
</dbReference>
<dbReference type="GO" id="GO:0007399">
    <property type="term" value="P:nervous system development"/>
    <property type="evidence" value="ECO:0000318"/>
    <property type="project" value="GO_Central"/>
</dbReference>
<dbReference type="GO" id="GO:0051402">
    <property type="term" value="P:neuron apoptotic process"/>
    <property type="evidence" value="ECO:0007669"/>
    <property type="project" value="Ensembl"/>
</dbReference>
<dbReference type="GO" id="GO:0070050">
    <property type="term" value="P:neuron cellular homeostasis"/>
    <property type="evidence" value="ECO:0000250"/>
    <property type="project" value="UniProtKB"/>
</dbReference>
<dbReference type="GO" id="GO:0001764">
    <property type="term" value="P:neuron migration"/>
    <property type="evidence" value="ECO:0007669"/>
    <property type="project" value="Ensembl"/>
</dbReference>
<dbReference type="GO" id="GO:0007218">
    <property type="term" value="P:neuropeptide signaling pathway"/>
    <property type="evidence" value="ECO:0007669"/>
    <property type="project" value="Ensembl"/>
</dbReference>
<dbReference type="GO" id="GO:0042698">
    <property type="term" value="P:ovulation cycle"/>
    <property type="evidence" value="ECO:0000250"/>
    <property type="project" value="UniProtKB"/>
</dbReference>
<dbReference type="GO" id="GO:0006909">
    <property type="term" value="P:phagocytosis"/>
    <property type="evidence" value="ECO:0000318"/>
    <property type="project" value="GO_Central"/>
</dbReference>
<dbReference type="GO" id="GO:0043491">
    <property type="term" value="P:phosphatidylinositol 3-kinase/protein kinase B signal transduction"/>
    <property type="evidence" value="ECO:0000303"/>
    <property type="project" value="UniProtKB"/>
</dbReference>
<dbReference type="GO" id="GO:0030168">
    <property type="term" value="P:platelet activation"/>
    <property type="evidence" value="ECO:0000250"/>
    <property type="project" value="UniProtKB"/>
</dbReference>
<dbReference type="GO" id="GO:0070527">
    <property type="term" value="P:platelet aggregation"/>
    <property type="evidence" value="ECO:0000250"/>
    <property type="project" value="UniProtKB"/>
</dbReference>
<dbReference type="GO" id="GO:0051897">
    <property type="term" value="P:positive regulation of phosphatidylinositol 3-kinase/protein kinase B signal transduction"/>
    <property type="evidence" value="ECO:0000250"/>
    <property type="project" value="UniProtKB"/>
</dbReference>
<dbReference type="GO" id="GO:1903902">
    <property type="term" value="P:positive regulation of viral life cycle"/>
    <property type="evidence" value="ECO:0000315"/>
    <property type="project" value="FlyBase"/>
</dbReference>
<dbReference type="GO" id="GO:0032940">
    <property type="term" value="P:secretion by cell"/>
    <property type="evidence" value="ECO:0000250"/>
    <property type="project" value="UniProtKB"/>
</dbReference>
<dbReference type="GO" id="GO:0007165">
    <property type="term" value="P:signal transduction"/>
    <property type="evidence" value="ECO:0000303"/>
    <property type="project" value="UniProtKB"/>
</dbReference>
<dbReference type="GO" id="GO:0007283">
    <property type="term" value="P:spermatogenesis"/>
    <property type="evidence" value="ECO:0000250"/>
    <property type="project" value="UniProtKB"/>
</dbReference>
<dbReference type="GO" id="GO:0034446">
    <property type="term" value="P:substrate adhesion-dependent cell spreading"/>
    <property type="evidence" value="ECO:0000250"/>
    <property type="project" value="UniProtKB"/>
</dbReference>
<dbReference type="GO" id="GO:0060068">
    <property type="term" value="P:vagina development"/>
    <property type="evidence" value="ECO:0007669"/>
    <property type="project" value="Ensembl"/>
</dbReference>
<dbReference type="CDD" id="cd00063">
    <property type="entry name" value="FN3"/>
    <property type="match status" value="2"/>
</dbReference>
<dbReference type="CDD" id="cd20961">
    <property type="entry name" value="Ig1_Tyro3_like"/>
    <property type="match status" value="1"/>
</dbReference>
<dbReference type="CDD" id="cd05749">
    <property type="entry name" value="IgI_2_Axl_Tyro3_like"/>
    <property type="match status" value="1"/>
</dbReference>
<dbReference type="CDD" id="cd05074">
    <property type="entry name" value="PTKc_Tyro3"/>
    <property type="match status" value="1"/>
</dbReference>
<dbReference type="FunFam" id="1.10.510.10:FF:000089">
    <property type="entry name" value="Tyrosine-protein kinase receptor TYRO3"/>
    <property type="match status" value="1"/>
</dbReference>
<dbReference type="FunFam" id="2.60.40.10:FF:000296">
    <property type="entry name" value="Tyrosine-protein kinase receptor TYRO3"/>
    <property type="match status" value="1"/>
</dbReference>
<dbReference type="FunFam" id="2.60.40.10:FF:000484">
    <property type="entry name" value="Tyrosine-protein kinase receptor TYRO3"/>
    <property type="match status" value="1"/>
</dbReference>
<dbReference type="FunFam" id="2.60.40.10:FF:000605">
    <property type="entry name" value="Tyrosine-protein kinase receptor TYRO3"/>
    <property type="match status" value="1"/>
</dbReference>
<dbReference type="FunFam" id="2.60.40.10:FF:000780">
    <property type="entry name" value="Tyrosine-protein kinase receptor TYRO3"/>
    <property type="match status" value="1"/>
</dbReference>
<dbReference type="FunFam" id="3.30.200.20:FF:000111">
    <property type="entry name" value="Tyrosine-protein kinase receptor TYRO3"/>
    <property type="match status" value="1"/>
</dbReference>
<dbReference type="Gene3D" id="2.60.40.10">
    <property type="entry name" value="Immunoglobulins"/>
    <property type="match status" value="4"/>
</dbReference>
<dbReference type="Gene3D" id="3.30.200.20">
    <property type="entry name" value="Phosphorylase Kinase, domain 1"/>
    <property type="match status" value="1"/>
</dbReference>
<dbReference type="Gene3D" id="1.10.510.10">
    <property type="entry name" value="Transferase(Phosphotransferase) domain 1"/>
    <property type="match status" value="1"/>
</dbReference>
<dbReference type="InterPro" id="IPR003961">
    <property type="entry name" value="FN3_dom"/>
</dbReference>
<dbReference type="InterPro" id="IPR036116">
    <property type="entry name" value="FN3_sf"/>
</dbReference>
<dbReference type="InterPro" id="IPR007110">
    <property type="entry name" value="Ig-like_dom"/>
</dbReference>
<dbReference type="InterPro" id="IPR036179">
    <property type="entry name" value="Ig-like_dom_sf"/>
</dbReference>
<dbReference type="InterPro" id="IPR013783">
    <property type="entry name" value="Ig-like_fold"/>
</dbReference>
<dbReference type="InterPro" id="IPR013098">
    <property type="entry name" value="Ig_I-set"/>
</dbReference>
<dbReference type="InterPro" id="IPR003599">
    <property type="entry name" value="Ig_sub"/>
</dbReference>
<dbReference type="InterPro" id="IPR003598">
    <property type="entry name" value="Ig_sub2"/>
</dbReference>
<dbReference type="InterPro" id="IPR011009">
    <property type="entry name" value="Kinase-like_dom_sf"/>
</dbReference>
<dbReference type="InterPro" id="IPR000719">
    <property type="entry name" value="Prot_kinase_dom"/>
</dbReference>
<dbReference type="InterPro" id="IPR017441">
    <property type="entry name" value="Protein_kinase_ATP_BS"/>
</dbReference>
<dbReference type="InterPro" id="IPR050122">
    <property type="entry name" value="RTK"/>
</dbReference>
<dbReference type="InterPro" id="IPR001245">
    <property type="entry name" value="Ser-Thr/Tyr_kinase_cat_dom"/>
</dbReference>
<dbReference type="InterPro" id="IPR008266">
    <property type="entry name" value="Tyr_kinase_AS"/>
</dbReference>
<dbReference type="InterPro" id="IPR020635">
    <property type="entry name" value="Tyr_kinase_cat_dom"/>
</dbReference>
<dbReference type="PANTHER" id="PTHR24416">
    <property type="entry name" value="TYROSINE-PROTEIN KINASE RECEPTOR"/>
    <property type="match status" value="1"/>
</dbReference>
<dbReference type="PANTHER" id="PTHR24416:SF279">
    <property type="entry name" value="TYROSINE-PROTEIN KINASE RECEPTOR TYRO3"/>
    <property type="match status" value="1"/>
</dbReference>
<dbReference type="Pfam" id="PF00041">
    <property type="entry name" value="fn3"/>
    <property type="match status" value="2"/>
</dbReference>
<dbReference type="Pfam" id="PF07679">
    <property type="entry name" value="I-set"/>
    <property type="match status" value="1"/>
</dbReference>
<dbReference type="Pfam" id="PF07714">
    <property type="entry name" value="PK_Tyr_Ser-Thr"/>
    <property type="match status" value="1"/>
</dbReference>
<dbReference type="PIRSF" id="PIRSF000615">
    <property type="entry name" value="TyrPK_CSF1-R"/>
    <property type="match status" value="1"/>
</dbReference>
<dbReference type="PRINTS" id="PR00109">
    <property type="entry name" value="TYRKINASE"/>
</dbReference>
<dbReference type="SMART" id="SM00060">
    <property type="entry name" value="FN3"/>
    <property type="match status" value="2"/>
</dbReference>
<dbReference type="SMART" id="SM00409">
    <property type="entry name" value="IG"/>
    <property type="match status" value="2"/>
</dbReference>
<dbReference type="SMART" id="SM00408">
    <property type="entry name" value="IGc2"/>
    <property type="match status" value="2"/>
</dbReference>
<dbReference type="SMART" id="SM00219">
    <property type="entry name" value="TyrKc"/>
    <property type="match status" value="1"/>
</dbReference>
<dbReference type="SUPFAM" id="SSF49265">
    <property type="entry name" value="Fibronectin type III"/>
    <property type="match status" value="1"/>
</dbReference>
<dbReference type="SUPFAM" id="SSF48726">
    <property type="entry name" value="Immunoglobulin"/>
    <property type="match status" value="2"/>
</dbReference>
<dbReference type="SUPFAM" id="SSF56112">
    <property type="entry name" value="Protein kinase-like (PK-like)"/>
    <property type="match status" value="1"/>
</dbReference>
<dbReference type="PROSITE" id="PS50853">
    <property type="entry name" value="FN3"/>
    <property type="match status" value="2"/>
</dbReference>
<dbReference type="PROSITE" id="PS50835">
    <property type="entry name" value="IG_LIKE"/>
    <property type="match status" value="2"/>
</dbReference>
<dbReference type="PROSITE" id="PS00107">
    <property type="entry name" value="PROTEIN_KINASE_ATP"/>
    <property type="match status" value="1"/>
</dbReference>
<dbReference type="PROSITE" id="PS50011">
    <property type="entry name" value="PROTEIN_KINASE_DOM"/>
    <property type="match status" value="1"/>
</dbReference>
<dbReference type="PROSITE" id="PS00109">
    <property type="entry name" value="PROTEIN_KINASE_TYR"/>
    <property type="match status" value="1"/>
</dbReference>
<organism>
    <name type="scientific">Homo sapiens</name>
    <name type="common">Human</name>
    <dbReference type="NCBI Taxonomy" id="9606"/>
    <lineage>
        <taxon>Eukaryota</taxon>
        <taxon>Metazoa</taxon>
        <taxon>Chordata</taxon>
        <taxon>Craniata</taxon>
        <taxon>Vertebrata</taxon>
        <taxon>Euteleostomi</taxon>
        <taxon>Mammalia</taxon>
        <taxon>Eutheria</taxon>
        <taxon>Euarchontoglires</taxon>
        <taxon>Primates</taxon>
        <taxon>Haplorrhini</taxon>
        <taxon>Catarrhini</taxon>
        <taxon>Hominidae</taxon>
        <taxon>Homo</taxon>
    </lineage>
</organism>
<reference key="1">
    <citation type="journal article" date="1994" name="J. Biol. Chem.">
        <title>RSE, a novel receptor-type tyrosine kinase with homology to Axl/Ufo, is expressed at high levels in the brain.</title>
        <authorList>
            <person name="Mark M.R."/>
            <person name="Scadden D.T."/>
            <person name="Wang Z."/>
            <person name="Gu Q."/>
            <person name="Goddard A."/>
            <person name="Godowski P.J."/>
        </authorList>
    </citation>
    <scope>NUCLEOTIDE SEQUENCE [MRNA]</scope>
</reference>
<reference key="2">
    <citation type="journal article" date="1994" name="Oncogene">
        <title>Cloning of the cDNA for a novel receptor tyrosine kinase, Sky, predominantly expressed in brain.</title>
        <authorList>
            <person name="Ohashi K."/>
            <person name="Mizuno K."/>
            <person name="Kuma K."/>
            <person name="Miyata T."/>
            <person name="Nakamura T."/>
        </authorList>
    </citation>
    <scope>NUCLEOTIDE SEQUENCE [MRNA]</scope>
</reference>
<reference key="3">
    <citation type="journal article" date="1994" name="Growth Factors">
        <title>Isolation and characterization of the human DTK receptor tyrosine kinase.</title>
        <authorList>
            <person name="Crosier K.E."/>
            <person name="Hall L.R."/>
            <person name="Lewis P.M."/>
            <person name="Morris C.M."/>
            <person name="Wood C.R."/>
            <person name="Morris J.C."/>
            <person name="Crosier P.S."/>
        </authorList>
    </citation>
    <scope>NUCLEOTIDE SEQUENCE [MRNA]</scope>
    <scope>VARIANT VAL-815</scope>
    <source>
        <tissue>Brain</tissue>
    </source>
</reference>
<reference key="4">
    <citation type="journal article" date="1996" name="Biol. Cell">
        <title>A tyrosine kinase-like molecule is localized in the nuclear membrane of neurons: hippocampal behavior under stress.</title>
        <authorList>
            <person name="Kajii Y."/>
            <person name="Ninomiya D."/>
            <person name="Kato M."/>
            <person name="Mizuguchi M."/>
            <person name="Saji M."/>
            <person name="Katsumoto T."/>
            <person name="Ohno K."/>
            <person name="Takashima S."/>
            <person name="Onodera K."/>
        </authorList>
    </citation>
    <scope>NUCLEOTIDE SEQUENCE [MRNA]</scope>
    <source>
        <tissue>Brain</tissue>
    </source>
</reference>
<reference key="5">
    <citation type="journal article" date="2004" name="Genome Res.">
        <title>The status, quality, and expansion of the NIH full-length cDNA project: the Mammalian Gene Collection (MGC).</title>
        <authorList>
            <consortium name="The MGC Project Team"/>
        </authorList>
    </citation>
    <scope>NUCLEOTIDE SEQUENCE [LARGE SCALE MRNA]</scope>
    <scope>VARIANTS LEU-21; SER-542; MET-819 AND GLY-824</scope>
    <source>
        <tissue>Skin</tissue>
        <tissue>Testis</tissue>
    </source>
</reference>
<reference key="6">
    <citation type="journal article" date="1993" name="Gene">
        <title>The human TYRO3 gene and pseudogene are located in chromosome 15q14-q25.</title>
        <authorList>
            <person name="Polvi A."/>
            <person name="Armstrong E."/>
            <person name="Lai C."/>
            <person name="Lemke G."/>
            <person name="Huebner K."/>
            <person name="Spritz R.A."/>
            <person name="Giuda L.C."/>
            <person name="Nicholls R.D."/>
            <person name="Alitalo K."/>
        </authorList>
    </citation>
    <scope>NUCLEOTIDE SEQUENCE [MRNA] OF 519-720</scope>
</reference>
<reference key="7">
    <citation type="journal article" date="1995" name="Biochem. Biophys. Res. Commun.">
        <title>Autophosphorylation activity and association with Src family kinase of Sky receptor tyrosine kinase.</title>
        <authorList>
            <person name="Toshima J."/>
            <person name="Ohashi K."/>
            <person name="Iwashita S."/>
            <person name="Mizuno K."/>
        </authorList>
    </citation>
    <scope>AUTOPHOSPHORYLATION</scope>
</reference>
<reference key="8">
    <citation type="journal article" date="1995" name="Cell">
        <title>Reevaluation of the roles of protein S and Gas6 as ligands for the receptor tyrosine kinase Rse/Tyro 3.</title>
        <authorList>
            <person name="Godowski P.J."/>
            <person name="Mark M.R."/>
            <person name="Chen J."/>
            <person name="Sadick M.D."/>
            <person name="Raab H."/>
            <person name="Hammonds R.G."/>
        </authorList>
    </citation>
    <scope>INTERACTION WITH GAS6</scope>
</reference>
<reference key="9">
    <citation type="journal article" date="2006" name="Cytokine Growth Factor Rev.">
        <title>Signalling and functional diversity within the Axl subfamily of receptor tyrosine kinases.</title>
        <authorList>
            <person name="Hafizi S."/>
            <person name="Dahlback B."/>
        </authorList>
    </citation>
    <scope>REVIEW ON FUNCTION</scope>
</reference>
<reference key="10">
    <citation type="journal article" date="2006" name="J. Virol.">
        <title>Tyro3 family-mediated cell entry of Ebola and Marburg viruses.</title>
        <authorList>
            <person name="Shimojima M."/>
            <person name="Takada A."/>
            <person name="Ebihara H."/>
            <person name="Neumann G."/>
            <person name="Fujioka K."/>
            <person name="Irimura T."/>
            <person name="Jones S."/>
            <person name="Feldmann H."/>
            <person name="Kawaoka Y."/>
        </authorList>
    </citation>
    <scope>FUNCTION (MICROBIAL INFECTION)</scope>
</reference>
<reference key="11">
    <citation type="journal article" date="2008" name="Nat. Rev. Immunol.">
        <title>Immunobiology of the TAM receptors.</title>
        <authorList>
            <person name="Lemke G."/>
            <person name="Rothlin C.V."/>
        </authorList>
    </citation>
    <scope>REVIEW ON FUNCTION</scope>
</reference>
<reference key="12">
    <citation type="journal article" date="2010" name="J. Thromb. Haemost.">
        <title>Potentiating role of Gas6 and Tyro3, Axl and Mer (TAM) receptors in human and murine platelet activation and thrombus stabilization.</title>
        <authorList>
            <person name="Cosemans J.M."/>
            <person name="Van Kruchten R."/>
            <person name="Olieslagers S."/>
            <person name="Schurgers L.J."/>
            <person name="Verheyen F.K."/>
            <person name="Munnix I.C."/>
            <person name="Waltenberger J."/>
            <person name="Angelillo-Scherrer A."/>
            <person name="Hoylaerts M.F."/>
            <person name="Carmeliet P."/>
            <person name="Heemskerk J.W."/>
        </authorList>
    </citation>
    <scope>FUNCTION IN PLATELET ACTIVATION</scope>
</reference>
<reference key="13">
    <citation type="journal article" date="2012" name="J. Virol.">
        <title>Identification of cell surface molecules involved in dystroglycan-independent Lassa virus cell entry.</title>
        <authorList>
            <person name="Shimojima M."/>
            <person name="Stroher U."/>
            <person name="Ebihara H."/>
            <person name="Feldmann H."/>
            <person name="Kawaoka Y."/>
        </authorList>
    </citation>
    <scope>FUNCTION (MICROBIAL INFECTION)</scope>
</reference>
<reference key="14">
    <citation type="journal article" date="2012" name="J. Vet. Med. Sci.">
        <title>Cell surface molecules involved in infection mediated by lymphocytic choriomeningitis virus glycoprotein.</title>
        <authorList>
            <person name="Shimojima M."/>
            <person name="Kawaoka Y."/>
        </authorList>
    </citation>
    <scope>FUNCTION (MICROBIAL INFECTION)</scope>
</reference>
<reference key="15">
    <citation type="journal article" date="2013" name="J. Proteome Res.">
        <title>Toward a comprehensive characterization of a human cancer cell phosphoproteome.</title>
        <authorList>
            <person name="Zhou H."/>
            <person name="Di Palma S."/>
            <person name="Preisinger C."/>
            <person name="Peng M."/>
            <person name="Polat A.N."/>
            <person name="Heck A.J."/>
            <person name="Mohammed S."/>
        </authorList>
    </citation>
    <scope>PHOSPHORYLATION [LARGE SCALE ANALYSIS] AT SER-466 AND SER-818</scope>
    <scope>IDENTIFICATION BY MASS SPECTROMETRY [LARGE SCALE ANALYSIS]</scope>
    <source>
        <tissue>Cervix carcinoma</tissue>
        <tissue>Erythroleukemia</tissue>
    </source>
</reference>
<reference key="16">
    <citation type="journal article" date="2014" name="Virology">
        <title>Phosphatidylserine receptors: enhancers of enveloped virus entry and infection.</title>
        <authorList>
            <person name="Moller-Tank S."/>
            <person name="Maury W."/>
        </authorList>
    </citation>
    <scope>FUNCTION (MICROBIAL INFECTION)</scope>
    <scope>REVIEW</scope>
</reference>
<reference key="17">
    <citation type="journal article" date="2004" name="J. Biol. Chem.">
        <title>Ligand recognition and homophilic interactions in Tyro3: structural insights into the Axl/Tyro3 receptor tyrosine kinase family.</title>
        <authorList>
            <person name="Heiring C."/>
            <person name="Dahlbaeck B."/>
            <person name="Muller Y.A."/>
        </authorList>
    </citation>
    <scope>X-RAY CRYSTALLOGRAPHY (1.96 ANGSTROMS) OF 41-222</scope>
    <scope>SUBUNIT</scope>
    <scope>INTERACTION WITH GAS6</scope>
    <scope>MUTAGENESIS OF ILE-99</scope>
    <scope>DISULFIDE BONDS</scope>
</reference>
<reference key="18">
    <citation type="journal article" date="2007" name="Nature">
        <title>Patterns of somatic mutation in human cancer genomes.</title>
        <authorList>
            <person name="Greenman C."/>
            <person name="Stephens P."/>
            <person name="Smith R."/>
            <person name="Dalgliesh G.L."/>
            <person name="Hunter C."/>
            <person name="Bignell G."/>
            <person name="Davies H."/>
            <person name="Teague J."/>
            <person name="Butler A."/>
            <person name="Stevens C."/>
            <person name="Edkins S."/>
            <person name="O'Meara S."/>
            <person name="Vastrik I."/>
            <person name="Schmidt E.E."/>
            <person name="Avis T."/>
            <person name="Barthorpe S."/>
            <person name="Bhamra G."/>
            <person name="Buck G."/>
            <person name="Choudhury B."/>
            <person name="Clements J."/>
            <person name="Cole J."/>
            <person name="Dicks E."/>
            <person name="Forbes S."/>
            <person name="Gray K."/>
            <person name="Halliday K."/>
            <person name="Harrison R."/>
            <person name="Hills K."/>
            <person name="Hinton J."/>
            <person name="Jenkinson A."/>
            <person name="Jones D."/>
            <person name="Menzies A."/>
            <person name="Mironenko T."/>
            <person name="Perry J."/>
            <person name="Raine K."/>
            <person name="Richardson D."/>
            <person name="Shepherd R."/>
            <person name="Small A."/>
            <person name="Tofts C."/>
            <person name="Varian J."/>
            <person name="Webb T."/>
            <person name="West S."/>
            <person name="Widaa S."/>
            <person name="Yates A."/>
            <person name="Cahill D.P."/>
            <person name="Louis D.N."/>
            <person name="Goldstraw P."/>
            <person name="Nicholson A.G."/>
            <person name="Brasseur F."/>
            <person name="Looijenga L."/>
            <person name="Weber B.L."/>
            <person name="Chiew Y.-E."/>
            <person name="DeFazio A."/>
            <person name="Greaves M.F."/>
            <person name="Green A.R."/>
            <person name="Campbell P."/>
            <person name="Birney E."/>
            <person name="Easton D.F."/>
            <person name="Chenevix-Trench G."/>
            <person name="Tan M.-H."/>
            <person name="Khoo S.K."/>
            <person name="Teh B.T."/>
            <person name="Yuen S.T."/>
            <person name="Leung S.Y."/>
            <person name="Wooster R."/>
            <person name="Futreal P.A."/>
            <person name="Stratton M.R."/>
        </authorList>
    </citation>
    <scope>VARIANT [LARGE SCALE ANALYSIS] THR-831</scope>
</reference>
<sequence length="890" mass="96905">MALRRSMGRPGLPPLPLPPPPRLGLLLAALASLLLPESAAAGLKLMGAPVKLTVSQGQPVKLNCSVEGMEEPDIQWVKDGAVVQNLDQLYIPVSEQHWIGFLSLKSVERSDAGRYWCQVEDGGETEISQPVWLTVEGVPFFTVEPKDLAVPPNAPFQLSCEAVGPPEPVTIVWWRGTTKIGGPAPSPSVLNVTGVTQSTMFSCEAHNLKGLASSRTATVHLQALPAAPFNITVTKLSSSNASVAWMPGADGRALLQSCTVQVTQAPGGWEVLAVVVPVPPFTCLLRDLVPATNYSLRVRCANALGPSPYADWVPFQTKGLAPASAPQNLHAIRTDSGLILEWEEVIPEAPLEGPLGPYKLSWVQDNGTQDELTVEGTRANLTGWDPQKDLIVRVCVSNAVGCGPWSQPLVVSSHDRAGQQGPPHSRTSWVPVVLGVLTALVTAAALALILLRKRRKETRFGQAFDSVMARGEPAVHFRAARSFNRERPERIEATLDSLGISDELKEKLEDVLIPEQQFTLGRMLGKGEFGSVREAQLKQEDGSFVKVAVKMLKADIIASSDIEEFLREAACMKEFDHPHVAKLVGVSLRSRAKGRLPIPMVILPFMKHGDLHAFLLASRIGENPFNLPLQTLIRFMVDIACGMEYLSSRNFIHRDLAARNCMLAEDMTVCVADFGLSRKIYSGDYYRQGCASKLPVKWLALESLADNLYTVQSDVWAFGVTMWEIMTRGQTPYAGIENAEIYNYLIGGNRLKQPPECMEDVYDLMYQCWSADPKQRPSFTCLRMELENILGQLSVLSASQDPLYINIERAEEPTAGGSLELPGRDQPYSGAGDGSGMGAVGGTPSDCRYILTPGGLAEQPGQAEHQPESPLNETQRLLLLQQGLLPHSSC</sequence>
<gene>
    <name type="primary">TYRO3</name>
    <name type="synonym">BYK</name>
    <name type="synonym">DTK</name>
    <name type="synonym">RSE</name>
    <name type="synonym">SKY</name>
    <name type="synonym">TIF</name>
</gene>
<protein>
    <recommendedName>
        <fullName>Tyrosine-protein kinase receptor TYRO3</fullName>
        <ecNumber>2.7.10.1</ecNumber>
    </recommendedName>
    <alternativeName>
        <fullName>Tyrosine-protein kinase BYK</fullName>
    </alternativeName>
    <alternativeName>
        <fullName>Tyrosine-protein kinase DTK</fullName>
    </alternativeName>
    <alternativeName>
        <fullName>Tyrosine-protein kinase RSE</fullName>
    </alternativeName>
    <alternativeName>
        <fullName>Tyrosine-protein kinase SKY</fullName>
    </alternativeName>
    <alternativeName>
        <fullName>Tyrosine-protein kinase TIF</fullName>
    </alternativeName>
</protein>
<accession>Q06418</accession>
<accession>O14953</accession>
<accession>Q86VR3</accession>